<keyword id="KW-0456">Lyase</keyword>
<keyword id="KW-0663">Pyridoxal phosphate</keyword>
<keyword id="KW-0704">Schiff base</keyword>
<protein>
    <recommendedName>
        <fullName evidence="1">Pyridoxal 5'-phosphate synthase subunit PdxS</fullName>
        <shortName evidence="1">PLP synthase subunit PdxS</shortName>
        <ecNumber evidence="1">4.3.3.6</ecNumber>
    </recommendedName>
    <alternativeName>
        <fullName evidence="1">Pdx1</fullName>
    </alternativeName>
</protein>
<proteinExistence type="inferred from homology"/>
<accession>P60799</accession>
<accession>Q99W84</accession>
<feature type="chain" id="PRO_0000109416" description="Pyridoxal 5'-phosphate synthase subunit PdxS">
    <location>
        <begin position="1"/>
        <end position="295"/>
    </location>
</feature>
<feature type="active site" description="Schiff-base intermediate with D-ribose 5-phosphate" evidence="1">
    <location>
        <position position="82"/>
    </location>
</feature>
<feature type="binding site" evidence="1">
    <location>
        <position position="25"/>
    </location>
    <ligand>
        <name>D-ribose 5-phosphate</name>
        <dbReference type="ChEBI" id="CHEBI:78346"/>
    </ligand>
</feature>
<feature type="binding site" evidence="1">
    <location>
        <position position="154"/>
    </location>
    <ligand>
        <name>D-ribose 5-phosphate</name>
        <dbReference type="ChEBI" id="CHEBI:78346"/>
    </ligand>
</feature>
<feature type="binding site" evidence="1">
    <location>
        <position position="166"/>
    </location>
    <ligand>
        <name>D-glyceraldehyde 3-phosphate</name>
        <dbReference type="ChEBI" id="CHEBI:59776"/>
    </ligand>
</feature>
<feature type="binding site" evidence="1">
    <location>
        <position position="215"/>
    </location>
    <ligand>
        <name>D-ribose 5-phosphate</name>
        <dbReference type="ChEBI" id="CHEBI:78346"/>
    </ligand>
</feature>
<feature type="binding site" evidence="1">
    <location>
        <begin position="236"/>
        <end position="237"/>
    </location>
    <ligand>
        <name>D-ribose 5-phosphate</name>
        <dbReference type="ChEBI" id="CHEBI:78346"/>
    </ligand>
</feature>
<name>PDXS_STAAW</name>
<organism>
    <name type="scientific">Staphylococcus aureus (strain MW2)</name>
    <dbReference type="NCBI Taxonomy" id="196620"/>
    <lineage>
        <taxon>Bacteria</taxon>
        <taxon>Bacillati</taxon>
        <taxon>Bacillota</taxon>
        <taxon>Bacilli</taxon>
        <taxon>Bacillales</taxon>
        <taxon>Staphylococcaceae</taxon>
        <taxon>Staphylococcus</taxon>
    </lineage>
</organism>
<dbReference type="EC" id="4.3.3.6" evidence="1"/>
<dbReference type="EMBL" id="BA000033">
    <property type="protein sequence ID" value="BAB94339.1"/>
    <property type="molecule type" value="Genomic_DNA"/>
</dbReference>
<dbReference type="RefSeq" id="WP_000034728.1">
    <property type="nucleotide sequence ID" value="NC_003923.1"/>
</dbReference>
<dbReference type="SMR" id="P60799"/>
<dbReference type="GeneID" id="66838811"/>
<dbReference type="KEGG" id="sam:MW0474"/>
<dbReference type="HOGENOM" id="CLU_055352_1_0_9"/>
<dbReference type="UniPathway" id="UPA00245"/>
<dbReference type="GO" id="GO:0036381">
    <property type="term" value="F:pyridoxal 5'-phosphate synthase (glutamine hydrolysing) activity"/>
    <property type="evidence" value="ECO:0007669"/>
    <property type="project" value="UniProtKB-UniRule"/>
</dbReference>
<dbReference type="GO" id="GO:0006520">
    <property type="term" value="P:amino acid metabolic process"/>
    <property type="evidence" value="ECO:0007669"/>
    <property type="project" value="TreeGrafter"/>
</dbReference>
<dbReference type="GO" id="GO:0042823">
    <property type="term" value="P:pyridoxal phosphate biosynthetic process"/>
    <property type="evidence" value="ECO:0007669"/>
    <property type="project" value="UniProtKB-UniRule"/>
</dbReference>
<dbReference type="GO" id="GO:0008615">
    <property type="term" value="P:pyridoxine biosynthetic process"/>
    <property type="evidence" value="ECO:0007669"/>
    <property type="project" value="TreeGrafter"/>
</dbReference>
<dbReference type="CDD" id="cd04727">
    <property type="entry name" value="pdxS"/>
    <property type="match status" value="1"/>
</dbReference>
<dbReference type="FunFam" id="3.20.20.70:FF:000001">
    <property type="entry name" value="Pyridoxine biosynthesis protein PDX1"/>
    <property type="match status" value="1"/>
</dbReference>
<dbReference type="Gene3D" id="3.20.20.70">
    <property type="entry name" value="Aldolase class I"/>
    <property type="match status" value="1"/>
</dbReference>
<dbReference type="HAMAP" id="MF_01824">
    <property type="entry name" value="PdxS"/>
    <property type="match status" value="1"/>
</dbReference>
<dbReference type="InterPro" id="IPR013785">
    <property type="entry name" value="Aldolase_TIM"/>
</dbReference>
<dbReference type="InterPro" id="IPR001852">
    <property type="entry name" value="PdxS/SNZ"/>
</dbReference>
<dbReference type="InterPro" id="IPR033755">
    <property type="entry name" value="PdxS/SNZ_N"/>
</dbReference>
<dbReference type="InterPro" id="IPR011060">
    <property type="entry name" value="RibuloseP-bd_barrel"/>
</dbReference>
<dbReference type="NCBIfam" id="NF003215">
    <property type="entry name" value="PRK04180.1"/>
    <property type="match status" value="1"/>
</dbReference>
<dbReference type="NCBIfam" id="TIGR00343">
    <property type="entry name" value="pyridoxal 5'-phosphate synthase lyase subunit PdxS"/>
    <property type="match status" value="1"/>
</dbReference>
<dbReference type="PANTHER" id="PTHR31829">
    <property type="entry name" value="PYRIDOXAL 5'-PHOSPHATE SYNTHASE SUBUNIT SNZ1-RELATED"/>
    <property type="match status" value="1"/>
</dbReference>
<dbReference type="PANTHER" id="PTHR31829:SF0">
    <property type="entry name" value="PYRIDOXAL 5'-PHOSPHATE SYNTHASE SUBUNIT SNZ1-RELATED"/>
    <property type="match status" value="1"/>
</dbReference>
<dbReference type="Pfam" id="PF01680">
    <property type="entry name" value="SOR_SNZ"/>
    <property type="match status" value="1"/>
</dbReference>
<dbReference type="PIRSF" id="PIRSF029271">
    <property type="entry name" value="Pdx1"/>
    <property type="match status" value="1"/>
</dbReference>
<dbReference type="SUPFAM" id="SSF51366">
    <property type="entry name" value="Ribulose-phoshate binding barrel"/>
    <property type="match status" value="1"/>
</dbReference>
<dbReference type="PROSITE" id="PS01235">
    <property type="entry name" value="PDXS_SNZ_1"/>
    <property type="match status" value="1"/>
</dbReference>
<dbReference type="PROSITE" id="PS51129">
    <property type="entry name" value="PDXS_SNZ_2"/>
    <property type="match status" value="1"/>
</dbReference>
<evidence type="ECO:0000255" key="1">
    <source>
        <dbReference type="HAMAP-Rule" id="MF_01824"/>
    </source>
</evidence>
<gene>
    <name evidence="1" type="primary">pdxS</name>
    <name type="ordered locus">MW0474</name>
</gene>
<sequence>MSKIIGSDRVKRGMAEMQKGGVIMDVVNAEQARIAEEAGAVAVMALERVPSDIRAAGGVARMANPKIVEEVMNAVSIPVMAKARIGHITEARVLEAMGVDYIDESEVLTPADEEYHLRKDQFTVPFVCGCRNLGEAARRIGEGAAMLRTKGEPGTGNIVEAVRHMRQVNSEVSRLTVMNDDEIMTFAKDIGAPYEILKQIKDNGRLPVVNFAAGGVATPQDAALMMELGADGVFVGSGIFKSEDPEKFAKAIVQATTHYQDYELIGRLASELGTAMKGLDINQLSLEERMQERGW</sequence>
<reference key="1">
    <citation type="journal article" date="2002" name="Lancet">
        <title>Genome and virulence determinants of high virulence community-acquired MRSA.</title>
        <authorList>
            <person name="Baba T."/>
            <person name="Takeuchi F."/>
            <person name="Kuroda M."/>
            <person name="Yuzawa H."/>
            <person name="Aoki K."/>
            <person name="Oguchi A."/>
            <person name="Nagai Y."/>
            <person name="Iwama N."/>
            <person name="Asano K."/>
            <person name="Naimi T."/>
            <person name="Kuroda H."/>
            <person name="Cui L."/>
            <person name="Yamamoto K."/>
            <person name="Hiramatsu K."/>
        </authorList>
    </citation>
    <scope>NUCLEOTIDE SEQUENCE [LARGE SCALE GENOMIC DNA]</scope>
    <source>
        <strain>MW2</strain>
    </source>
</reference>
<comment type="function">
    <text evidence="1">Catalyzes the formation of pyridoxal 5'-phosphate from ribose 5-phosphate (RBP), glyceraldehyde 3-phosphate (G3P) and ammonia. The ammonia is provided by the PdxT subunit. Can also use ribulose 5-phosphate and dihydroxyacetone phosphate as substrates, resulting from enzyme-catalyzed isomerization of RBP and G3P, respectively.</text>
</comment>
<comment type="catalytic activity">
    <reaction evidence="1">
        <text>aldehydo-D-ribose 5-phosphate + D-glyceraldehyde 3-phosphate + L-glutamine = pyridoxal 5'-phosphate + L-glutamate + phosphate + 3 H2O + H(+)</text>
        <dbReference type="Rhea" id="RHEA:31507"/>
        <dbReference type="ChEBI" id="CHEBI:15377"/>
        <dbReference type="ChEBI" id="CHEBI:15378"/>
        <dbReference type="ChEBI" id="CHEBI:29985"/>
        <dbReference type="ChEBI" id="CHEBI:43474"/>
        <dbReference type="ChEBI" id="CHEBI:58273"/>
        <dbReference type="ChEBI" id="CHEBI:58359"/>
        <dbReference type="ChEBI" id="CHEBI:59776"/>
        <dbReference type="ChEBI" id="CHEBI:597326"/>
        <dbReference type="EC" id="4.3.3.6"/>
    </reaction>
</comment>
<comment type="pathway">
    <text evidence="1">Cofactor biosynthesis; pyridoxal 5'-phosphate biosynthesis.</text>
</comment>
<comment type="subunit">
    <text evidence="1">In the presence of PdxT, forms a dodecamer of heterodimers.</text>
</comment>
<comment type="similarity">
    <text evidence="1">Belongs to the PdxS/SNZ family.</text>
</comment>